<accession>P0DXW2</accession>
<comment type="function">
    <text evidence="3 4">Short chain dehydrogenase; part of the gene cluster that mediates the biosynthesis of the tetrahydropyranyl antifungal agent restricticin that acts as an inhibitor of CYP51 and blocks the ergosterol biosynthesis (PubMed:39105744). The highly reducing polyketide synthase resH, the short chain dehydrogenase resG, the cyclase resF, the FAD-dependent monooxygenase resA and the enoylreductase resD are required to generate the first stable intermediate desmethylrestrictinol. ResH with resD biosynthesize the first polyketide chain intermediate that is reduced by resG, followed by epoxidation by resA before 6-endo cyclization via epoxide opening by resF leads to desmethylrestrictinol. The methyltransferase resE then catalyzes the C4 O-methylation of desmethylrestrictinol to produce restrictinol, and the nonribosomal peptide synthetase resC catalyzes the C3 esterification of restrictinol with glycine that leads to restricticin (By similarity).</text>
</comment>
<comment type="pathway">
    <text evidence="4">Antifungal biosynthesis.</text>
</comment>
<comment type="similarity">
    <text evidence="6">Belongs to the short-chain dehydrogenases/reductases (SDR) family.</text>
</comment>
<proteinExistence type="inferred from homology"/>
<reference key="1">
    <citation type="journal article" date="2024" name="J. Agric. Food Chem.">
        <title>Discovery of a hybrid molecule with phytotoxic activity by genome mining, heterologous expression, and OSMAC strategy.</title>
        <authorList>
            <person name="Lu Y."/>
            <person name="Li Y."/>
            <person name="Dou M."/>
            <person name="Liu D."/>
            <person name="Lin W."/>
            <person name="Fan A."/>
        </authorList>
    </citation>
    <scope>NUCLEOTIDE SEQUENCE [GENOMIC DNA]</scope>
    <scope>FUNCTION</scope>
    <scope>PATHWAY</scope>
</reference>
<name>RESG_ASPSL</name>
<organism>
    <name type="scientific">Aspergillus sclerotiorum</name>
    <dbReference type="NCBI Taxonomy" id="138282"/>
    <lineage>
        <taxon>Eukaryota</taxon>
        <taxon>Fungi</taxon>
        <taxon>Dikarya</taxon>
        <taxon>Ascomycota</taxon>
        <taxon>Pezizomycotina</taxon>
        <taxon>Eurotiomycetes</taxon>
        <taxon>Eurotiomycetidae</taxon>
        <taxon>Eurotiales</taxon>
        <taxon>Aspergillaceae</taxon>
        <taxon>Aspergillus</taxon>
        <taxon>Aspergillus subgen. Circumdati</taxon>
    </lineage>
</organism>
<keyword id="KW-0521">NADP</keyword>
<keyword id="KW-0560">Oxidoreductase</keyword>
<protein>
    <recommendedName>
        <fullName evidence="5">Short chain dehydrogenase resG</fullName>
        <ecNumber evidence="7">1.1.1.-</ecNumber>
    </recommendedName>
    <alternativeName>
        <fullName evidence="5">Restricticin biosynthesis cluster protein G</fullName>
    </alternativeName>
</protein>
<feature type="chain" id="PRO_0000461552" description="Short chain dehydrogenase resG">
    <location>
        <begin position="1"/>
        <end position="359"/>
    </location>
</feature>
<feature type="active site" description="Proton donor" evidence="2">
    <location>
        <position position="237"/>
    </location>
</feature>
<feature type="active site" description="Lowers pKa of active site Tyr" evidence="2">
    <location>
        <position position="241"/>
    </location>
</feature>
<feature type="binding site" evidence="1">
    <location>
        <position position="87"/>
    </location>
    <ligand>
        <name>NADP(+)</name>
        <dbReference type="ChEBI" id="CHEBI:58349"/>
    </ligand>
</feature>
<feature type="binding site" evidence="1">
    <location>
        <position position="110"/>
    </location>
    <ligand>
        <name>NADP(+)</name>
        <dbReference type="ChEBI" id="CHEBI:58349"/>
    </ligand>
</feature>
<feature type="binding site" evidence="2">
    <location>
        <position position="137"/>
    </location>
    <ligand>
        <name>NADP(+)</name>
        <dbReference type="ChEBI" id="CHEBI:58349"/>
    </ligand>
</feature>
<feature type="binding site" evidence="2">
    <location>
        <position position="237"/>
    </location>
    <ligand>
        <name>NADP(+)</name>
        <dbReference type="ChEBI" id="CHEBI:58349"/>
    </ligand>
</feature>
<feature type="binding site" evidence="2">
    <location>
        <position position="241"/>
    </location>
    <ligand>
        <name>NADP(+)</name>
        <dbReference type="ChEBI" id="CHEBI:58349"/>
    </ligand>
</feature>
<evidence type="ECO:0000250" key="1">
    <source>
        <dbReference type="UniProtKB" id="L0E2Z4"/>
    </source>
</evidence>
<evidence type="ECO:0000250" key="2">
    <source>
        <dbReference type="UniProtKB" id="O93868"/>
    </source>
</evidence>
<evidence type="ECO:0000250" key="3">
    <source>
        <dbReference type="UniProtKB" id="P9WEG6"/>
    </source>
</evidence>
<evidence type="ECO:0000269" key="4">
    <source>
    </source>
</evidence>
<evidence type="ECO:0000303" key="5">
    <source>
    </source>
</evidence>
<evidence type="ECO:0000305" key="6"/>
<evidence type="ECO:0000305" key="7">
    <source>
    </source>
</evidence>
<dbReference type="EC" id="1.1.1.-" evidence="7"/>
<dbReference type="GO" id="GO:0016491">
    <property type="term" value="F:oxidoreductase activity"/>
    <property type="evidence" value="ECO:0007669"/>
    <property type="project" value="UniProtKB-KW"/>
</dbReference>
<dbReference type="Gene3D" id="3.40.50.720">
    <property type="entry name" value="NAD(P)-binding Rossmann-like Domain"/>
    <property type="match status" value="1"/>
</dbReference>
<dbReference type="InterPro" id="IPR036291">
    <property type="entry name" value="NAD(P)-bd_dom_sf"/>
</dbReference>
<dbReference type="InterPro" id="IPR002347">
    <property type="entry name" value="SDR_fam"/>
</dbReference>
<dbReference type="PANTHER" id="PTHR24320:SF252">
    <property type="entry name" value="DEHYDROGENASE_REDUCTASE FAMILY PROTEIN, PUTATIVE (AFU_ORTHOLOGUE AFUA_3G08550)-RELATED"/>
    <property type="match status" value="1"/>
</dbReference>
<dbReference type="PANTHER" id="PTHR24320">
    <property type="entry name" value="RETINOL DEHYDROGENASE"/>
    <property type="match status" value="1"/>
</dbReference>
<dbReference type="Pfam" id="PF00106">
    <property type="entry name" value="adh_short"/>
    <property type="match status" value="1"/>
</dbReference>
<dbReference type="PRINTS" id="PR00081">
    <property type="entry name" value="GDHRDH"/>
</dbReference>
<dbReference type="SUPFAM" id="SSF51735">
    <property type="entry name" value="NAD(P)-binding Rossmann-fold domains"/>
    <property type="match status" value="1"/>
</dbReference>
<gene>
    <name evidence="5" type="primary">resG</name>
</gene>
<sequence>MTGFLPEPLRMLVTSPALLDFTSDGPLPYALRQKFTGKPPPVTSNLSLASQTVLVTGATSGVGLEAARQLAQLGPRLLILGVRNASKAEQIKSELERDTPNLTVQVAELDLESLLSVDRFVDELSANSIRLDLALLNAGFFAHDDRITDDGYSPLFQVNFLSTAYLTLKLLPLLHTTAPPHPPGTTTPPGPRLVLVTSEAHAWTTFPDVPRPTENRTQPILSVFQDKNTLGSADDQYARAKLLLALFGKELSRRLTAAENDTTVVITTPGFCASNFFPDGMMTRLIQLTSARSVQQGGALHVFAATAPGPEIHGAYLRDGKPTGLSKFAQGPQGQILQERLWGEMEEFFMQRGGSPLGM</sequence>